<proteinExistence type="inferred from homology"/>
<sequence length="101" mass="11722">MRPYELMVIIDPEVEERTVEPSLQKFLNVITNDGGTIEKVDIWGRRRLAYDIKKKSEGIYAVVNFTAKPETAKELDRQLSLNETIMRTKITRPEEQKVVAE</sequence>
<keyword id="KW-0687">Ribonucleoprotein</keyword>
<keyword id="KW-0689">Ribosomal protein</keyword>
<keyword id="KW-0694">RNA-binding</keyword>
<keyword id="KW-0699">rRNA-binding</keyword>
<protein>
    <recommendedName>
        <fullName evidence="1">Small ribosomal subunit protein bS6</fullName>
    </recommendedName>
    <alternativeName>
        <fullName evidence="2">30S ribosomal protein S6</fullName>
    </alternativeName>
</protein>
<gene>
    <name evidence="1" type="primary">rpsF</name>
    <name type="ordered locus">Achl_3891</name>
</gene>
<accession>B8H841</accession>
<evidence type="ECO:0000255" key="1">
    <source>
        <dbReference type="HAMAP-Rule" id="MF_00360"/>
    </source>
</evidence>
<evidence type="ECO:0000305" key="2"/>
<organism>
    <name type="scientific">Pseudarthrobacter chlorophenolicus (strain ATCC 700700 / DSM 12829 / CIP 107037 / JCM 12360 / KCTC 9906 / NCIMB 13794 / A6)</name>
    <name type="common">Arthrobacter chlorophenolicus</name>
    <dbReference type="NCBI Taxonomy" id="452863"/>
    <lineage>
        <taxon>Bacteria</taxon>
        <taxon>Bacillati</taxon>
        <taxon>Actinomycetota</taxon>
        <taxon>Actinomycetes</taxon>
        <taxon>Micrococcales</taxon>
        <taxon>Micrococcaceae</taxon>
        <taxon>Pseudarthrobacter</taxon>
    </lineage>
</organism>
<dbReference type="EMBL" id="CP001341">
    <property type="protein sequence ID" value="ACL41844.1"/>
    <property type="molecule type" value="Genomic_DNA"/>
</dbReference>
<dbReference type="RefSeq" id="WP_015939036.1">
    <property type="nucleotide sequence ID" value="NC_011886.1"/>
</dbReference>
<dbReference type="SMR" id="B8H841"/>
<dbReference type="STRING" id="452863.Achl_3891"/>
<dbReference type="KEGG" id="ach:Achl_3891"/>
<dbReference type="eggNOG" id="COG0360">
    <property type="taxonomic scope" value="Bacteria"/>
</dbReference>
<dbReference type="HOGENOM" id="CLU_113441_5_3_11"/>
<dbReference type="OrthoDB" id="9812702at2"/>
<dbReference type="Proteomes" id="UP000002505">
    <property type="component" value="Chromosome"/>
</dbReference>
<dbReference type="GO" id="GO:0005737">
    <property type="term" value="C:cytoplasm"/>
    <property type="evidence" value="ECO:0007669"/>
    <property type="project" value="UniProtKB-ARBA"/>
</dbReference>
<dbReference type="GO" id="GO:1990904">
    <property type="term" value="C:ribonucleoprotein complex"/>
    <property type="evidence" value="ECO:0007669"/>
    <property type="project" value="UniProtKB-KW"/>
</dbReference>
<dbReference type="GO" id="GO:0005840">
    <property type="term" value="C:ribosome"/>
    <property type="evidence" value="ECO:0007669"/>
    <property type="project" value="UniProtKB-KW"/>
</dbReference>
<dbReference type="GO" id="GO:0070181">
    <property type="term" value="F:small ribosomal subunit rRNA binding"/>
    <property type="evidence" value="ECO:0007669"/>
    <property type="project" value="TreeGrafter"/>
</dbReference>
<dbReference type="GO" id="GO:0003735">
    <property type="term" value="F:structural constituent of ribosome"/>
    <property type="evidence" value="ECO:0007669"/>
    <property type="project" value="InterPro"/>
</dbReference>
<dbReference type="GO" id="GO:0006412">
    <property type="term" value="P:translation"/>
    <property type="evidence" value="ECO:0007669"/>
    <property type="project" value="UniProtKB-UniRule"/>
</dbReference>
<dbReference type="CDD" id="cd00473">
    <property type="entry name" value="bS6"/>
    <property type="match status" value="1"/>
</dbReference>
<dbReference type="FunFam" id="3.30.70.60:FF:000002">
    <property type="entry name" value="30S ribosomal protein S6"/>
    <property type="match status" value="1"/>
</dbReference>
<dbReference type="Gene3D" id="3.30.70.60">
    <property type="match status" value="1"/>
</dbReference>
<dbReference type="HAMAP" id="MF_00360">
    <property type="entry name" value="Ribosomal_bS6"/>
    <property type="match status" value="1"/>
</dbReference>
<dbReference type="InterPro" id="IPR000529">
    <property type="entry name" value="Ribosomal_bS6"/>
</dbReference>
<dbReference type="InterPro" id="IPR020815">
    <property type="entry name" value="Ribosomal_bS6_CS"/>
</dbReference>
<dbReference type="InterPro" id="IPR035980">
    <property type="entry name" value="Ribosomal_bS6_sf"/>
</dbReference>
<dbReference type="InterPro" id="IPR020814">
    <property type="entry name" value="Ribosomal_S6_plastid/chlpt"/>
</dbReference>
<dbReference type="InterPro" id="IPR014717">
    <property type="entry name" value="Transl_elong_EF1B/ribsomal_bS6"/>
</dbReference>
<dbReference type="NCBIfam" id="TIGR00166">
    <property type="entry name" value="S6"/>
    <property type="match status" value="1"/>
</dbReference>
<dbReference type="PANTHER" id="PTHR21011">
    <property type="entry name" value="MITOCHONDRIAL 28S RIBOSOMAL PROTEIN S6"/>
    <property type="match status" value="1"/>
</dbReference>
<dbReference type="PANTHER" id="PTHR21011:SF1">
    <property type="entry name" value="SMALL RIBOSOMAL SUBUNIT PROTEIN BS6M"/>
    <property type="match status" value="1"/>
</dbReference>
<dbReference type="Pfam" id="PF01250">
    <property type="entry name" value="Ribosomal_S6"/>
    <property type="match status" value="1"/>
</dbReference>
<dbReference type="SUPFAM" id="SSF54995">
    <property type="entry name" value="Ribosomal protein S6"/>
    <property type="match status" value="1"/>
</dbReference>
<dbReference type="PROSITE" id="PS01048">
    <property type="entry name" value="RIBOSOMAL_S6"/>
    <property type="match status" value="1"/>
</dbReference>
<reference key="1">
    <citation type="submission" date="2009-01" db="EMBL/GenBank/DDBJ databases">
        <title>Complete sequence of chromosome of Arthrobacter chlorophenolicus A6.</title>
        <authorList>
            <consortium name="US DOE Joint Genome Institute"/>
            <person name="Lucas S."/>
            <person name="Copeland A."/>
            <person name="Lapidus A."/>
            <person name="Glavina del Rio T."/>
            <person name="Tice H."/>
            <person name="Bruce D."/>
            <person name="Goodwin L."/>
            <person name="Pitluck S."/>
            <person name="Goltsman E."/>
            <person name="Clum A."/>
            <person name="Larimer F."/>
            <person name="Land M."/>
            <person name="Hauser L."/>
            <person name="Kyrpides N."/>
            <person name="Mikhailova N."/>
            <person name="Jansson J."/>
            <person name="Richardson P."/>
        </authorList>
    </citation>
    <scope>NUCLEOTIDE SEQUENCE [LARGE SCALE GENOMIC DNA]</scope>
    <source>
        <strain>ATCC 700700 / DSM 12829 / CIP 107037 / JCM 12360 / KCTC 9906 / NCIMB 13794 / A6</strain>
    </source>
</reference>
<name>RS6_PSECP</name>
<feature type="chain" id="PRO_1000133506" description="Small ribosomal subunit protein bS6">
    <location>
        <begin position="1"/>
        <end position="101"/>
    </location>
</feature>
<comment type="function">
    <text evidence="1">Binds together with bS18 to 16S ribosomal RNA.</text>
</comment>
<comment type="similarity">
    <text evidence="1">Belongs to the bacterial ribosomal protein bS6 family.</text>
</comment>